<protein>
    <recommendedName>
        <fullName evidence="1">Large ribosomal subunit protein uL29</fullName>
    </recommendedName>
    <alternativeName>
        <fullName evidence="2">50S ribosomal protein L29</fullName>
    </alternativeName>
</protein>
<gene>
    <name evidence="1" type="primary">rpmC</name>
    <name type="ordered locus">CPR_2391</name>
</gene>
<reference key="1">
    <citation type="journal article" date="2006" name="Genome Res.">
        <title>Skewed genomic variability in strains of the toxigenic bacterial pathogen, Clostridium perfringens.</title>
        <authorList>
            <person name="Myers G.S.A."/>
            <person name="Rasko D.A."/>
            <person name="Cheung J.K."/>
            <person name="Ravel J."/>
            <person name="Seshadri R."/>
            <person name="DeBoy R.T."/>
            <person name="Ren Q."/>
            <person name="Varga J."/>
            <person name="Awad M.M."/>
            <person name="Brinkac L.M."/>
            <person name="Daugherty S.C."/>
            <person name="Haft D.H."/>
            <person name="Dodson R.J."/>
            <person name="Madupu R."/>
            <person name="Nelson W.C."/>
            <person name="Rosovitz M.J."/>
            <person name="Sullivan S.A."/>
            <person name="Khouri H."/>
            <person name="Dimitrov G.I."/>
            <person name="Watkins K.L."/>
            <person name="Mulligan S."/>
            <person name="Benton J."/>
            <person name="Radune D."/>
            <person name="Fisher D.J."/>
            <person name="Atkins H.S."/>
            <person name="Hiscox T."/>
            <person name="Jost B.H."/>
            <person name="Billington S.J."/>
            <person name="Songer J.G."/>
            <person name="McClane B.A."/>
            <person name="Titball R.W."/>
            <person name="Rood J.I."/>
            <person name="Melville S.B."/>
            <person name="Paulsen I.T."/>
        </authorList>
    </citation>
    <scope>NUCLEOTIDE SEQUENCE [LARGE SCALE GENOMIC DNA]</scope>
    <source>
        <strain>SM101 / Type A</strain>
    </source>
</reference>
<proteinExistence type="inferred from homology"/>
<keyword id="KW-0687">Ribonucleoprotein</keyword>
<keyword id="KW-0689">Ribosomal protein</keyword>
<dbReference type="EMBL" id="CP000312">
    <property type="protein sequence ID" value="ABG85462.1"/>
    <property type="molecule type" value="Genomic_DNA"/>
</dbReference>
<dbReference type="RefSeq" id="WP_003454396.1">
    <property type="nucleotide sequence ID" value="NZ_CAXVKH010000004.1"/>
</dbReference>
<dbReference type="SMR" id="Q0SQF2"/>
<dbReference type="GeneID" id="93001017"/>
<dbReference type="KEGG" id="cpr:CPR_2391"/>
<dbReference type="Proteomes" id="UP000001824">
    <property type="component" value="Chromosome"/>
</dbReference>
<dbReference type="GO" id="GO:0022625">
    <property type="term" value="C:cytosolic large ribosomal subunit"/>
    <property type="evidence" value="ECO:0007669"/>
    <property type="project" value="TreeGrafter"/>
</dbReference>
<dbReference type="GO" id="GO:0003735">
    <property type="term" value="F:structural constituent of ribosome"/>
    <property type="evidence" value="ECO:0007669"/>
    <property type="project" value="InterPro"/>
</dbReference>
<dbReference type="GO" id="GO:0006412">
    <property type="term" value="P:translation"/>
    <property type="evidence" value="ECO:0007669"/>
    <property type="project" value="UniProtKB-UniRule"/>
</dbReference>
<dbReference type="CDD" id="cd00427">
    <property type="entry name" value="Ribosomal_L29_HIP"/>
    <property type="match status" value="1"/>
</dbReference>
<dbReference type="FunFam" id="1.10.287.310:FF:000001">
    <property type="entry name" value="50S ribosomal protein L29"/>
    <property type="match status" value="1"/>
</dbReference>
<dbReference type="Gene3D" id="1.10.287.310">
    <property type="match status" value="1"/>
</dbReference>
<dbReference type="HAMAP" id="MF_00374">
    <property type="entry name" value="Ribosomal_uL29"/>
    <property type="match status" value="1"/>
</dbReference>
<dbReference type="InterPro" id="IPR050063">
    <property type="entry name" value="Ribosomal_protein_uL29"/>
</dbReference>
<dbReference type="InterPro" id="IPR001854">
    <property type="entry name" value="Ribosomal_uL29"/>
</dbReference>
<dbReference type="InterPro" id="IPR018254">
    <property type="entry name" value="Ribosomal_uL29_CS"/>
</dbReference>
<dbReference type="InterPro" id="IPR036049">
    <property type="entry name" value="Ribosomal_uL29_sf"/>
</dbReference>
<dbReference type="NCBIfam" id="TIGR00012">
    <property type="entry name" value="L29"/>
    <property type="match status" value="1"/>
</dbReference>
<dbReference type="PANTHER" id="PTHR10916">
    <property type="entry name" value="60S RIBOSOMAL PROTEIN L35/50S RIBOSOMAL PROTEIN L29"/>
    <property type="match status" value="1"/>
</dbReference>
<dbReference type="PANTHER" id="PTHR10916:SF0">
    <property type="entry name" value="LARGE RIBOSOMAL SUBUNIT PROTEIN UL29C"/>
    <property type="match status" value="1"/>
</dbReference>
<dbReference type="Pfam" id="PF00831">
    <property type="entry name" value="Ribosomal_L29"/>
    <property type="match status" value="1"/>
</dbReference>
<dbReference type="SUPFAM" id="SSF46561">
    <property type="entry name" value="Ribosomal protein L29 (L29p)"/>
    <property type="match status" value="1"/>
</dbReference>
<dbReference type="PROSITE" id="PS00579">
    <property type="entry name" value="RIBOSOMAL_L29"/>
    <property type="match status" value="1"/>
</dbReference>
<evidence type="ECO:0000255" key="1">
    <source>
        <dbReference type="HAMAP-Rule" id="MF_00374"/>
    </source>
</evidence>
<evidence type="ECO:0000305" key="2"/>
<comment type="similarity">
    <text evidence="1">Belongs to the universal ribosomal protein uL29 family.</text>
</comment>
<sequence length="69" mass="8134">MKARELKELRTSNPQDLIKKLGDLKAELFNLRFQLATGQLENPMRIREVKKSIAQIKTIIREEELKIEQ</sequence>
<organism>
    <name type="scientific">Clostridium perfringens (strain SM101 / Type A)</name>
    <dbReference type="NCBI Taxonomy" id="289380"/>
    <lineage>
        <taxon>Bacteria</taxon>
        <taxon>Bacillati</taxon>
        <taxon>Bacillota</taxon>
        <taxon>Clostridia</taxon>
        <taxon>Eubacteriales</taxon>
        <taxon>Clostridiaceae</taxon>
        <taxon>Clostridium</taxon>
    </lineage>
</organism>
<accession>Q0SQF2</accession>
<feature type="chain" id="PRO_1000007461" description="Large ribosomal subunit protein uL29">
    <location>
        <begin position="1"/>
        <end position="69"/>
    </location>
</feature>
<name>RL29_CLOPS</name>